<dbReference type="EMBL" id="CP000927">
    <property type="protein sequence ID" value="ABZ71744.1"/>
    <property type="molecule type" value="Genomic_DNA"/>
</dbReference>
<dbReference type="SMR" id="B0SXF9"/>
<dbReference type="STRING" id="366602.Caul_2617"/>
<dbReference type="KEGG" id="cak:Caul_2617"/>
<dbReference type="eggNOG" id="COG1492">
    <property type="taxonomic scope" value="Bacteria"/>
</dbReference>
<dbReference type="HOGENOM" id="CLU_019250_2_2_5"/>
<dbReference type="OrthoDB" id="9808302at2"/>
<dbReference type="UniPathway" id="UPA00148"/>
<dbReference type="GO" id="GO:0015420">
    <property type="term" value="F:ABC-type vitamin B12 transporter activity"/>
    <property type="evidence" value="ECO:0007669"/>
    <property type="project" value="UniProtKB-UniRule"/>
</dbReference>
<dbReference type="GO" id="GO:0003824">
    <property type="term" value="F:catalytic activity"/>
    <property type="evidence" value="ECO:0007669"/>
    <property type="project" value="InterPro"/>
</dbReference>
<dbReference type="GO" id="GO:0009236">
    <property type="term" value="P:cobalamin biosynthetic process"/>
    <property type="evidence" value="ECO:0007669"/>
    <property type="project" value="UniProtKB-UniRule"/>
</dbReference>
<dbReference type="CDD" id="cd05389">
    <property type="entry name" value="CobQ_N"/>
    <property type="match status" value="1"/>
</dbReference>
<dbReference type="CDD" id="cd01750">
    <property type="entry name" value="GATase1_CobQ"/>
    <property type="match status" value="1"/>
</dbReference>
<dbReference type="Gene3D" id="3.40.50.880">
    <property type="match status" value="1"/>
</dbReference>
<dbReference type="Gene3D" id="3.40.50.300">
    <property type="entry name" value="P-loop containing nucleotide triphosphate hydrolases"/>
    <property type="match status" value="1"/>
</dbReference>
<dbReference type="HAMAP" id="MF_00028">
    <property type="entry name" value="CobQ"/>
    <property type="match status" value="1"/>
</dbReference>
<dbReference type="InterPro" id="IPR029062">
    <property type="entry name" value="Class_I_gatase-like"/>
</dbReference>
<dbReference type="InterPro" id="IPR002586">
    <property type="entry name" value="CobQ/CobB/MinD/ParA_Nub-bd_dom"/>
</dbReference>
<dbReference type="InterPro" id="IPR033949">
    <property type="entry name" value="CobQ_GATase1"/>
</dbReference>
<dbReference type="InterPro" id="IPR047045">
    <property type="entry name" value="CobQ_N"/>
</dbReference>
<dbReference type="InterPro" id="IPR004459">
    <property type="entry name" value="CobQ_synth"/>
</dbReference>
<dbReference type="InterPro" id="IPR011698">
    <property type="entry name" value="GATase_3"/>
</dbReference>
<dbReference type="InterPro" id="IPR027417">
    <property type="entry name" value="P-loop_NTPase"/>
</dbReference>
<dbReference type="NCBIfam" id="TIGR00313">
    <property type="entry name" value="cobQ"/>
    <property type="match status" value="1"/>
</dbReference>
<dbReference type="NCBIfam" id="NF001989">
    <property type="entry name" value="PRK00784.1"/>
    <property type="match status" value="1"/>
</dbReference>
<dbReference type="PANTHER" id="PTHR21343:SF1">
    <property type="entry name" value="COBYRIC ACID SYNTHASE"/>
    <property type="match status" value="1"/>
</dbReference>
<dbReference type="PANTHER" id="PTHR21343">
    <property type="entry name" value="DETHIOBIOTIN SYNTHETASE"/>
    <property type="match status" value="1"/>
</dbReference>
<dbReference type="Pfam" id="PF01656">
    <property type="entry name" value="CbiA"/>
    <property type="match status" value="1"/>
</dbReference>
<dbReference type="Pfam" id="PF07685">
    <property type="entry name" value="GATase_3"/>
    <property type="match status" value="1"/>
</dbReference>
<dbReference type="SUPFAM" id="SSF52317">
    <property type="entry name" value="Class I glutamine amidotransferase-like"/>
    <property type="match status" value="1"/>
</dbReference>
<dbReference type="SUPFAM" id="SSF52540">
    <property type="entry name" value="P-loop containing nucleoside triphosphate hydrolases"/>
    <property type="match status" value="1"/>
</dbReference>
<dbReference type="PROSITE" id="PS51274">
    <property type="entry name" value="GATASE_COBBQ"/>
    <property type="match status" value="1"/>
</dbReference>
<gene>
    <name evidence="1" type="primary">cobQ</name>
    <name type="ordered locus">Caul_2617</name>
</gene>
<protein>
    <recommendedName>
        <fullName evidence="1">Cobyric acid synthase</fullName>
    </recommendedName>
</protein>
<organism>
    <name type="scientific">Caulobacter sp. (strain K31)</name>
    <dbReference type="NCBI Taxonomy" id="366602"/>
    <lineage>
        <taxon>Bacteria</taxon>
        <taxon>Pseudomonadati</taxon>
        <taxon>Pseudomonadota</taxon>
        <taxon>Alphaproteobacteria</taxon>
        <taxon>Caulobacterales</taxon>
        <taxon>Caulobacteraceae</taxon>
        <taxon>Caulobacter</taxon>
    </lineage>
</organism>
<proteinExistence type="inferred from homology"/>
<evidence type="ECO:0000255" key="1">
    <source>
        <dbReference type="HAMAP-Rule" id="MF_00028"/>
    </source>
</evidence>
<reference key="1">
    <citation type="submission" date="2008-01" db="EMBL/GenBank/DDBJ databases">
        <title>Complete sequence of chromosome of Caulobacter sp. K31.</title>
        <authorList>
            <consortium name="US DOE Joint Genome Institute"/>
            <person name="Copeland A."/>
            <person name="Lucas S."/>
            <person name="Lapidus A."/>
            <person name="Barry K."/>
            <person name="Glavina del Rio T."/>
            <person name="Dalin E."/>
            <person name="Tice H."/>
            <person name="Pitluck S."/>
            <person name="Bruce D."/>
            <person name="Goodwin L."/>
            <person name="Thompson L.S."/>
            <person name="Brettin T."/>
            <person name="Detter J.C."/>
            <person name="Han C."/>
            <person name="Schmutz J."/>
            <person name="Larimer F."/>
            <person name="Land M."/>
            <person name="Hauser L."/>
            <person name="Kyrpides N."/>
            <person name="Kim E."/>
            <person name="Stephens C."/>
            <person name="Richardson P."/>
        </authorList>
    </citation>
    <scope>NUCLEOTIDE SEQUENCE [LARGE SCALE GENOMIC DNA]</scope>
    <source>
        <strain>K31</strain>
    </source>
</reference>
<comment type="function">
    <text evidence="1">Catalyzes amidations at positions B, D, E, and G on adenosylcobyrinic A,C-diamide. NH(2) groups are provided by glutamine, and one molecule of ATP is hydrogenolyzed for each amidation.</text>
</comment>
<comment type="pathway">
    <text evidence="1">Cofactor biosynthesis; adenosylcobalamin biosynthesis.</text>
</comment>
<comment type="similarity">
    <text evidence="1">Belongs to the CobB/CobQ family. CobQ subfamily.</text>
</comment>
<feature type="chain" id="PRO_1000074397" description="Cobyric acid synthase">
    <location>
        <begin position="1"/>
        <end position="486"/>
    </location>
</feature>
<feature type="domain" description="GATase cobBQ-type" evidence="1">
    <location>
        <begin position="251"/>
        <end position="439"/>
    </location>
</feature>
<feature type="active site" description="Nucleophile" evidence="1">
    <location>
        <position position="333"/>
    </location>
</feature>
<feature type="active site" evidence="1">
    <location>
        <position position="431"/>
    </location>
</feature>
<keyword id="KW-0169">Cobalamin biosynthesis</keyword>
<keyword id="KW-0315">Glutamine amidotransferase</keyword>
<accession>B0SXF9</accession>
<name>COBQ_CAUSK</name>
<sequence>MASLMIQGCGSDVGKSTLVAGLCRLFVNRGLIVRPFKPQNMSNNAAVTEDGGEIGRAQALQAIACRTPPTVHMNPVLLKPQSDVGAQVVVRGKVVGAYQARAFQGLKPDLLATTVESYRLLAAEADLVLVEGAGSPAETNLRAGDIANMGFAHAADVPVALIGDIDRGHVIAALAGAHLVLDAADRERIKGFIINKFRGDPSLFDEGRREIVARTGWPDLGMAPWLASARALPAEDAVALERPVREDGGRRAKIVVPMLSRIANFDEFDPLRADPSLDFSFLPPGTPVPGDADLVILPGTKATLADLTFLRAQGWDIDILAHARRGGRVLGVCGGYQMLGRTVSDPEGVEGAPGSAPGLGLLDVETVLLGDKVLRATAGRLVGTDAAFSGYEMHIGRTTGQGAARPMLAFDGGAADGAVSADGRVAGAYVHGLFERGEARAALLAPLGVAASSGDHAAQVDAALDEIAAVLERSLDIEAIARIAGV</sequence>